<evidence type="ECO:0000250" key="1">
    <source>
        <dbReference type="UniProtKB" id="P0CI24"/>
    </source>
</evidence>
<evidence type="ECO:0000269" key="2">
    <source>
    </source>
</evidence>
<evidence type="ECO:0000305" key="3"/>
<proteinExistence type="evidence at protein level"/>
<organism>
    <name type="scientific">Conus marmoreus</name>
    <name type="common">Marble cone</name>
    <dbReference type="NCBI Taxonomy" id="42752"/>
    <lineage>
        <taxon>Eukaryota</taxon>
        <taxon>Metazoa</taxon>
        <taxon>Spiralia</taxon>
        <taxon>Lophotrochozoa</taxon>
        <taxon>Mollusca</taxon>
        <taxon>Gastropoda</taxon>
        <taxon>Caenogastropoda</taxon>
        <taxon>Neogastropoda</taxon>
        <taxon>Conoidea</taxon>
        <taxon>Conidae</taxon>
        <taxon>Conus</taxon>
    </lineage>
</organism>
<feature type="peptide" id="PRO_0000289865" description="Conotoxin mr3c">
    <location>
        <begin position="1"/>
        <end position="16"/>
    </location>
</feature>
<feature type="modified residue" description="4-hydroxyproline" evidence="2">
    <location>
        <position position="13"/>
    </location>
</feature>
<feature type="disulfide bond" evidence="1">
    <location>
        <begin position="1"/>
        <end position="15"/>
    </location>
</feature>
<feature type="disulfide bond" evidence="1">
    <location>
        <begin position="2"/>
        <end position="11"/>
    </location>
</feature>
<feature type="disulfide bond" evidence="1">
    <location>
        <begin position="7"/>
        <end position="14"/>
    </location>
</feature>
<protein>
    <recommendedName>
        <fullName>Conotoxin mr3c</fullName>
    </recommendedName>
</protein>
<keyword id="KW-0903">Direct protein sequencing</keyword>
<keyword id="KW-1015">Disulfide bond</keyword>
<keyword id="KW-0379">Hydroxylation</keyword>
<keyword id="KW-0528">Neurotoxin</keyword>
<keyword id="KW-0964">Secreted</keyword>
<keyword id="KW-0800">Toxin</keyword>
<sequence length="16" mass="1699">CCAPSACRLGCRPCCR</sequence>
<accession>P0C424</accession>
<dbReference type="ConoServer" id="1486">
    <property type="toxin name" value="MrIIIC"/>
</dbReference>
<dbReference type="GO" id="GO:0005576">
    <property type="term" value="C:extracellular region"/>
    <property type="evidence" value="ECO:0007669"/>
    <property type="project" value="UniProtKB-SubCell"/>
</dbReference>
<dbReference type="GO" id="GO:0090729">
    <property type="term" value="F:toxin activity"/>
    <property type="evidence" value="ECO:0007669"/>
    <property type="project" value="UniProtKB-KW"/>
</dbReference>
<comment type="function">
    <text>Intracranially injection into mice does not elicit symptoms.</text>
</comment>
<comment type="subcellular location">
    <subcellularLocation>
        <location>Secreted</location>
    </subcellularLocation>
</comment>
<comment type="tissue specificity">
    <text>Expressed by the venom duct.</text>
</comment>
<comment type="domain">
    <text>The cysteine framework is III (CC-C-C-CC). Classified in the M-2 branch, since 2 residues stand between the fourth and the fifth cysteine residues.</text>
</comment>
<comment type="mass spectrometry" mass="1707.6" method="Electrospray" evidence="2"/>
<comment type="similarity">
    <text evidence="3">Belongs to the conotoxin M superfamily.</text>
</comment>
<reference key="1">
    <citation type="journal article" date="2006" name="FEBS J.">
        <title>Characterization of novel M-superfamily conotoxins with new disulfide linkage.</title>
        <authorList>
            <person name="Han Y.-H."/>
            <person name="Wang Q."/>
            <person name="Jiang H."/>
            <person name="Liu L."/>
            <person name="Xiao C."/>
            <person name="Yuan D.-D."/>
            <person name="Shao X.-X."/>
            <person name="Dai Q.-Y."/>
            <person name="Cheng J.-S."/>
            <person name="Chi C.-W."/>
        </authorList>
    </citation>
    <scope>PROTEIN SEQUENCE</scope>
    <scope>HYDROXYLATION AT PRO-13</scope>
    <scope>MASS SPECTROMETRY</scope>
    <scope>BIOASSAY</scope>
    <source>
        <tissue>Venom</tissue>
    </source>
</reference>
<name>M3C_CONMR</name>